<proteinExistence type="inferred from homology"/>
<dbReference type="EMBL" id="CP000931">
    <property type="protein sequence ID" value="ABZ76924.1"/>
    <property type="molecule type" value="Genomic_DNA"/>
</dbReference>
<dbReference type="RefSeq" id="WP_012277452.1">
    <property type="nucleotide sequence ID" value="NC_010334.1"/>
</dbReference>
<dbReference type="SMR" id="B0TIY9"/>
<dbReference type="STRING" id="458817.Shal_2365"/>
<dbReference type="KEGG" id="shl:Shal_2365"/>
<dbReference type="eggNOG" id="COG3109">
    <property type="taxonomic scope" value="Bacteria"/>
</dbReference>
<dbReference type="HOGENOM" id="CLU_113254_0_0_6"/>
<dbReference type="OrthoDB" id="8421419at2"/>
<dbReference type="Proteomes" id="UP000001317">
    <property type="component" value="Chromosome"/>
</dbReference>
<dbReference type="GO" id="GO:0005829">
    <property type="term" value="C:cytosol"/>
    <property type="evidence" value="ECO:0007669"/>
    <property type="project" value="TreeGrafter"/>
</dbReference>
<dbReference type="GO" id="GO:0033592">
    <property type="term" value="F:RNA strand annealing activity"/>
    <property type="evidence" value="ECO:0007669"/>
    <property type="project" value="UniProtKB-UniRule"/>
</dbReference>
<dbReference type="GO" id="GO:0034057">
    <property type="term" value="F:RNA strand-exchange activity"/>
    <property type="evidence" value="ECO:0007669"/>
    <property type="project" value="UniProtKB-UniRule"/>
</dbReference>
<dbReference type="GO" id="GO:0010608">
    <property type="term" value="P:post-transcriptional regulation of gene expression"/>
    <property type="evidence" value="ECO:0007669"/>
    <property type="project" value="InterPro"/>
</dbReference>
<dbReference type="FunFam" id="1.10.1710.10:FF:000001">
    <property type="entry name" value="RNA chaperone ProQ"/>
    <property type="match status" value="1"/>
</dbReference>
<dbReference type="Gene3D" id="1.10.1710.10">
    <property type="entry name" value="ProQ/FinO domain"/>
    <property type="match status" value="1"/>
</dbReference>
<dbReference type="HAMAP" id="MF_00749">
    <property type="entry name" value="ProQ"/>
    <property type="match status" value="1"/>
</dbReference>
<dbReference type="InterPro" id="IPR023529">
    <property type="entry name" value="ProQ"/>
</dbReference>
<dbReference type="InterPro" id="IPR016103">
    <property type="entry name" value="ProQ/FinO"/>
</dbReference>
<dbReference type="InterPro" id="IPR036442">
    <property type="entry name" value="ProQ/FinO_sf"/>
</dbReference>
<dbReference type="InterPro" id="IPR035236">
    <property type="entry name" value="ProQ_C"/>
</dbReference>
<dbReference type="NCBIfam" id="NF003434">
    <property type="entry name" value="PRK04950.1"/>
    <property type="match status" value="1"/>
</dbReference>
<dbReference type="PANTHER" id="PTHR38106">
    <property type="entry name" value="RNA CHAPERONE PROQ"/>
    <property type="match status" value="1"/>
</dbReference>
<dbReference type="PANTHER" id="PTHR38106:SF1">
    <property type="entry name" value="RNA CHAPERONE PROQ"/>
    <property type="match status" value="1"/>
</dbReference>
<dbReference type="Pfam" id="PF04352">
    <property type="entry name" value="ProQ"/>
    <property type="match status" value="1"/>
</dbReference>
<dbReference type="Pfam" id="PF17516">
    <property type="entry name" value="ProQ_C"/>
    <property type="match status" value="1"/>
</dbReference>
<dbReference type="SMART" id="SM00945">
    <property type="entry name" value="ProQ"/>
    <property type="match status" value="1"/>
</dbReference>
<dbReference type="SUPFAM" id="SSF48657">
    <property type="entry name" value="FinO-like"/>
    <property type="match status" value="1"/>
</dbReference>
<organism>
    <name type="scientific">Shewanella halifaxensis (strain HAW-EB4)</name>
    <dbReference type="NCBI Taxonomy" id="458817"/>
    <lineage>
        <taxon>Bacteria</taxon>
        <taxon>Pseudomonadati</taxon>
        <taxon>Pseudomonadota</taxon>
        <taxon>Gammaproteobacteria</taxon>
        <taxon>Alteromonadales</taxon>
        <taxon>Shewanellaceae</taxon>
        <taxon>Shewanella</taxon>
    </lineage>
</organism>
<name>PROQ_SHEHH</name>
<accession>B0TIY9</accession>
<comment type="function">
    <text evidence="1">RNA chaperone with significant RNA binding, RNA strand exchange and RNA duplexing activities.</text>
</comment>
<comment type="subcellular location">
    <subcellularLocation>
        <location evidence="1">Cytoplasm</location>
    </subcellularLocation>
</comment>
<comment type="similarity">
    <text evidence="1">Belongs to the ProQ family.</text>
</comment>
<evidence type="ECO:0000255" key="1">
    <source>
        <dbReference type="HAMAP-Rule" id="MF_00749"/>
    </source>
</evidence>
<evidence type="ECO:0000256" key="2">
    <source>
        <dbReference type="SAM" id="MobiDB-lite"/>
    </source>
</evidence>
<gene>
    <name evidence="1" type="primary">proQ</name>
    <name type="ordered locus">Shal_2365</name>
</gene>
<feature type="chain" id="PRO_1000083490" description="RNA chaperone ProQ">
    <location>
        <begin position="1"/>
        <end position="212"/>
    </location>
</feature>
<feature type="region of interest" description="Disordered" evidence="2">
    <location>
        <begin position="107"/>
        <end position="153"/>
    </location>
</feature>
<feature type="compositionally biased region" description="Low complexity" evidence="2">
    <location>
        <begin position="117"/>
        <end position="126"/>
    </location>
</feature>
<feature type="compositionally biased region" description="Basic residues" evidence="2">
    <location>
        <begin position="127"/>
        <end position="141"/>
    </location>
</feature>
<reference key="1">
    <citation type="submission" date="2008-01" db="EMBL/GenBank/DDBJ databases">
        <title>Complete sequence of Shewanella halifaxensis HAW-EB4.</title>
        <authorList>
            <consortium name="US DOE Joint Genome Institute"/>
            <person name="Copeland A."/>
            <person name="Lucas S."/>
            <person name="Lapidus A."/>
            <person name="Glavina del Rio T."/>
            <person name="Dalin E."/>
            <person name="Tice H."/>
            <person name="Bruce D."/>
            <person name="Goodwin L."/>
            <person name="Pitluck S."/>
            <person name="Sims D."/>
            <person name="Brettin T."/>
            <person name="Detter J.C."/>
            <person name="Han C."/>
            <person name="Kuske C.R."/>
            <person name="Schmutz J."/>
            <person name="Larimer F."/>
            <person name="Land M."/>
            <person name="Hauser L."/>
            <person name="Kyrpides N."/>
            <person name="Kim E."/>
            <person name="Zhao J.-S."/>
            <person name="Richardson P."/>
        </authorList>
    </citation>
    <scope>NUCLEOTIDE SEQUENCE [LARGE SCALE GENOMIC DNA]</scope>
    <source>
        <strain>HAW-EB4</strain>
    </source>
</reference>
<sequence length="212" mass="23320">MESTEKLTDTNAILAYLYETFPLCFIAEGETKPLKIGLFQDLAERLADDSKVSKTQLRIALRRYTSSWRYLKCVKAGAQRIDLDGNACGELEQEHIDHAAATLKESQDKAKAKRVAQAKSANPAAKTAKKPVKKPVAKRPKQTQSSKPAKEPVVAENLTPAVLAELKPKQRVNVKLGKSPVAGVILDIKKEDVQVQLDSGLTIKVRAEHILL</sequence>
<keyword id="KW-0143">Chaperone</keyword>
<keyword id="KW-0963">Cytoplasm</keyword>
<keyword id="KW-0694">RNA-binding</keyword>
<protein>
    <recommendedName>
        <fullName evidence="1">RNA chaperone ProQ</fullName>
    </recommendedName>
</protein>